<evidence type="ECO:0000255" key="1">
    <source>
        <dbReference type="HAMAP-Rule" id="MF_00624"/>
    </source>
</evidence>
<reference key="1">
    <citation type="journal article" date="2006" name="Appl. Environ. Microbiol.">
        <title>Complete genome sequence of the marine, chemolithoautotrophic, ammonia-oxidizing bacterium Nitrosococcus oceani ATCC 19707.</title>
        <authorList>
            <person name="Klotz M.G."/>
            <person name="Arp D.J."/>
            <person name="Chain P.S.G."/>
            <person name="El-Sheikh A.F."/>
            <person name="Hauser L.J."/>
            <person name="Hommes N.G."/>
            <person name="Larimer F.W."/>
            <person name="Malfatti S.A."/>
            <person name="Norton J.M."/>
            <person name="Poret-Peterson A.T."/>
            <person name="Vergez L.M."/>
            <person name="Ward B.B."/>
        </authorList>
    </citation>
    <scope>NUCLEOTIDE SEQUENCE [LARGE SCALE GENOMIC DNA]</scope>
    <source>
        <strain>ATCC 19707 / BCRC 17464 / JCM 30415 / NCIMB 11848 / C-107</strain>
    </source>
</reference>
<sequence>MTKNYSARFVSRLTRDTLALILAGGRGSRLKNLTAWRAKPAVPIGGKFRIIDFPLSNCVNSGVRRICVLTQYKAHSLVRHIQQGWGFMRGYLGEFVELMPASQRIEDSWYAGTADAVYQNLDIVRSHNPEYVLILAGDHVYKMDYGDMLAYHVEREADMTVGCIHVPLKEAKAFGVMSVDENFRVTEFTEKPEHPQPSPGRSDETLASMGIYVFNAAFLYEQLIKNADAFNSSHDFGKDIIPSILRSHYRVIAFPFSDVQGGDPGYWRDVGTVDAFWNANLELIGVSPELNLYDEDWPIWTYQAQLPPAKFIFDNEDRRGMAVDSMVSGGCIIAGAWIGHSLLFSNVWVQSHTEVASSVILPDVKIGKHCHIRKAILDKGCNVPDGTVIGEDLEEDKRRFYVTEEGVVLVTPEMLGQKYRYIR</sequence>
<protein>
    <recommendedName>
        <fullName evidence="1">Glucose-1-phosphate adenylyltransferase</fullName>
        <ecNumber evidence="1">2.7.7.27</ecNumber>
    </recommendedName>
    <alternativeName>
        <fullName evidence="1">ADP-glucose pyrophosphorylase</fullName>
        <shortName evidence="1">ADPGlc PPase</shortName>
    </alternativeName>
    <alternativeName>
        <fullName evidence="1">ADP-glucose synthase</fullName>
    </alternativeName>
</protein>
<proteinExistence type="inferred from homology"/>
<gene>
    <name evidence="1" type="primary">glgC</name>
    <name type="ordered locus">Noc_0905</name>
</gene>
<keyword id="KW-0067">ATP-binding</keyword>
<keyword id="KW-0119">Carbohydrate metabolism</keyword>
<keyword id="KW-0320">Glycogen biosynthesis</keyword>
<keyword id="KW-0321">Glycogen metabolism</keyword>
<keyword id="KW-0547">Nucleotide-binding</keyword>
<keyword id="KW-0548">Nucleotidyltransferase</keyword>
<keyword id="KW-1185">Reference proteome</keyword>
<keyword id="KW-0808">Transferase</keyword>
<name>GLGC_NITOC</name>
<feature type="chain" id="PRO_0000261882" description="Glucose-1-phosphate adenylyltransferase">
    <location>
        <begin position="1"/>
        <end position="423"/>
    </location>
</feature>
<feature type="binding site" evidence="1">
    <location>
        <position position="110"/>
    </location>
    <ligand>
        <name>alpha-D-glucose 1-phosphate</name>
        <dbReference type="ChEBI" id="CHEBI:58601"/>
    </ligand>
</feature>
<feature type="binding site" evidence="1">
    <location>
        <position position="175"/>
    </location>
    <ligand>
        <name>alpha-D-glucose 1-phosphate</name>
        <dbReference type="ChEBI" id="CHEBI:58601"/>
    </ligand>
</feature>
<feature type="binding site" evidence="1">
    <location>
        <begin position="190"/>
        <end position="191"/>
    </location>
    <ligand>
        <name>alpha-D-glucose 1-phosphate</name>
        <dbReference type="ChEBI" id="CHEBI:58601"/>
    </ligand>
</feature>
<feature type="binding site" evidence="1">
    <location>
        <position position="208"/>
    </location>
    <ligand>
        <name>alpha-D-glucose 1-phosphate</name>
        <dbReference type="ChEBI" id="CHEBI:58601"/>
    </ligand>
</feature>
<comment type="function">
    <text evidence="1">Involved in the biosynthesis of ADP-glucose, a building block required for the elongation reactions to produce glycogen. Catalyzes the reaction between ATP and alpha-D-glucose 1-phosphate (G1P) to produce pyrophosphate and ADP-Glc.</text>
</comment>
<comment type="catalytic activity">
    <reaction evidence="1">
        <text>alpha-D-glucose 1-phosphate + ATP + H(+) = ADP-alpha-D-glucose + diphosphate</text>
        <dbReference type="Rhea" id="RHEA:12120"/>
        <dbReference type="ChEBI" id="CHEBI:15378"/>
        <dbReference type="ChEBI" id="CHEBI:30616"/>
        <dbReference type="ChEBI" id="CHEBI:33019"/>
        <dbReference type="ChEBI" id="CHEBI:57498"/>
        <dbReference type="ChEBI" id="CHEBI:58601"/>
        <dbReference type="EC" id="2.7.7.27"/>
    </reaction>
</comment>
<comment type="pathway">
    <text evidence="1">Glycan biosynthesis; glycogen biosynthesis.</text>
</comment>
<comment type="subunit">
    <text evidence="1">Homotetramer.</text>
</comment>
<comment type="similarity">
    <text evidence="1">Belongs to the bacterial/plant glucose-1-phosphate adenylyltransferase family.</text>
</comment>
<accession>Q3JCM9</accession>
<dbReference type="EC" id="2.7.7.27" evidence="1"/>
<dbReference type="EMBL" id="CP000127">
    <property type="protein sequence ID" value="ABA57417.1"/>
    <property type="molecule type" value="Genomic_DNA"/>
</dbReference>
<dbReference type="RefSeq" id="WP_002809109.1">
    <property type="nucleotide sequence ID" value="NC_007484.1"/>
</dbReference>
<dbReference type="SMR" id="Q3JCM9"/>
<dbReference type="FunCoup" id="Q3JCM9">
    <property type="interactions" value="160"/>
</dbReference>
<dbReference type="STRING" id="323261.Noc_0905"/>
<dbReference type="KEGG" id="noc:Noc_0905"/>
<dbReference type="eggNOG" id="COG0448">
    <property type="taxonomic scope" value="Bacteria"/>
</dbReference>
<dbReference type="HOGENOM" id="CLU_029499_14_1_6"/>
<dbReference type="InParanoid" id="Q3JCM9"/>
<dbReference type="UniPathway" id="UPA00164"/>
<dbReference type="Proteomes" id="UP000006838">
    <property type="component" value="Chromosome"/>
</dbReference>
<dbReference type="GO" id="GO:0005524">
    <property type="term" value="F:ATP binding"/>
    <property type="evidence" value="ECO:0007669"/>
    <property type="project" value="UniProtKB-KW"/>
</dbReference>
<dbReference type="GO" id="GO:0008878">
    <property type="term" value="F:glucose-1-phosphate adenylyltransferase activity"/>
    <property type="evidence" value="ECO:0007669"/>
    <property type="project" value="UniProtKB-UniRule"/>
</dbReference>
<dbReference type="GO" id="GO:0005978">
    <property type="term" value="P:glycogen biosynthetic process"/>
    <property type="evidence" value="ECO:0007669"/>
    <property type="project" value="UniProtKB-UniRule"/>
</dbReference>
<dbReference type="CDD" id="cd02508">
    <property type="entry name" value="ADP_Glucose_PP"/>
    <property type="match status" value="1"/>
</dbReference>
<dbReference type="CDD" id="cd04651">
    <property type="entry name" value="LbH_G1P_AT_C"/>
    <property type="match status" value="1"/>
</dbReference>
<dbReference type="Gene3D" id="2.160.10.10">
    <property type="entry name" value="Hexapeptide repeat proteins"/>
    <property type="match status" value="1"/>
</dbReference>
<dbReference type="Gene3D" id="3.90.550.10">
    <property type="entry name" value="Spore Coat Polysaccharide Biosynthesis Protein SpsA, Chain A"/>
    <property type="match status" value="1"/>
</dbReference>
<dbReference type="HAMAP" id="MF_00624">
    <property type="entry name" value="GlgC"/>
    <property type="match status" value="1"/>
</dbReference>
<dbReference type="InterPro" id="IPR011831">
    <property type="entry name" value="ADP-Glc_PPase"/>
</dbReference>
<dbReference type="InterPro" id="IPR005836">
    <property type="entry name" value="ADP_Glu_pyroP_CS"/>
</dbReference>
<dbReference type="InterPro" id="IPR023049">
    <property type="entry name" value="GlgC_bac"/>
</dbReference>
<dbReference type="InterPro" id="IPR056818">
    <property type="entry name" value="GlmU/GlgC-like_hexapep"/>
</dbReference>
<dbReference type="InterPro" id="IPR005835">
    <property type="entry name" value="NTP_transferase_dom"/>
</dbReference>
<dbReference type="InterPro" id="IPR029044">
    <property type="entry name" value="Nucleotide-diphossugar_trans"/>
</dbReference>
<dbReference type="InterPro" id="IPR011004">
    <property type="entry name" value="Trimer_LpxA-like_sf"/>
</dbReference>
<dbReference type="NCBIfam" id="TIGR02091">
    <property type="entry name" value="glgC"/>
    <property type="match status" value="1"/>
</dbReference>
<dbReference type="NCBIfam" id="NF001947">
    <property type="entry name" value="PRK00725.1"/>
    <property type="match status" value="1"/>
</dbReference>
<dbReference type="NCBIfam" id="NF002023">
    <property type="entry name" value="PRK00844.1"/>
    <property type="match status" value="1"/>
</dbReference>
<dbReference type="PANTHER" id="PTHR43523:SF2">
    <property type="entry name" value="GLUCOSE-1-PHOSPHATE ADENYLYLTRANSFERASE"/>
    <property type="match status" value="1"/>
</dbReference>
<dbReference type="PANTHER" id="PTHR43523">
    <property type="entry name" value="GLUCOSE-1-PHOSPHATE ADENYLYLTRANSFERASE-RELATED"/>
    <property type="match status" value="1"/>
</dbReference>
<dbReference type="Pfam" id="PF24894">
    <property type="entry name" value="Hexapep_GlmU"/>
    <property type="match status" value="1"/>
</dbReference>
<dbReference type="Pfam" id="PF00483">
    <property type="entry name" value="NTP_transferase"/>
    <property type="match status" value="1"/>
</dbReference>
<dbReference type="SUPFAM" id="SSF53448">
    <property type="entry name" value="Nucleotide-diphospho-sugar transferases"/>
    <property type="match status" value="1"/>
</dbReference>
<dbReference type="SUPFAM" id="SSF51161">
    <property type="entry name" value="Trimeric LpxA-like enzymes"/>
    <property type="match status" value="1"/>
</dbReference>
<dbReference type="PROSITE" id="PS00808">
    <property type="entry name" value="ADP_GLC_PYROPHOSPH_1"/>
    <property type="match status" value="1"/>
</dbReference>
<dbReference type="PROSITE" id="PS00809">
    <property type="entry name" value="ADP_GLC_PYROPHOSPH_2"/>
    <property type="match status" value="1"/>
</dbReference>
<organism>
    <name type="scientific">Nitrosococcus oceani (strain ATCC 19707 / BCRC 17464 / JCM 30415 / NCIMB 11848 / C-107)</name>
    <dbReference type="NCBI Taxonomy" id="323261"/>
    <lineage>
        <taxon>Bacteria</taxon>
        <taxon>Pseudomonadati</taxon>
        <taxon>Pseudomonadota</taxon>
        <taxon>Gammaproteobacteria</taxon>
        <taxon>Chromatiales</taxon>
        <taxon>Chromatiaceae</taxon>
        <taxon>Nitrosococcus</taxon>
    </lineage>
</organism>